<accession>P30671</accession>
<accession>A7MB87</accession>
<comment type="function">
    <text evidence="1">Guanine nucleotide-binding proteins (G proteins) are involved as a modulator or transducer in various transmembrane signaling systems. The beta and gamma chains are required for the GTPase activity, for replacement of GDP by GTP, and for G protein-effector interaction. Plays a role in the regulation of adenylyl cyclase signaling in certain regions of the brain. Plays a role in the formation or stabilization of a G protein heterotrimer (G(olf) subunit alpha-beta-gamma-7) that is required for adenylyl cyclase activity in the striatum (By similarity).</text>
</comment>
<comment type="subunit">
    <text>G proteins are composed of 3 units, alpha, beta and gamma.</text>
</comment>
<comment type="subcellular location">
    <subcellularLocation>
        <location evidence="4">Cell membrane</location>
        <topology evidence="4">Lipid-anchor</topology>
        <orientation evidence="4">Cytoplasmic side</orientation>
    </subcellularLocation>
</comment>
<comment type="tissue specificity">
    <text>Expressed in a variety of tissues.</text>
</comment>
<comment type="PTM">
    <text>Ser-2 is probably acetylated.</text>
</comment>
<comment type="similarity">
    <text evidence="4">Belongs to the G protein gamma family.</text>
</comment>
<feature type="initiator methionine" description="Removed" evidence="2 3">
    <location>
        <position position="1"/>
    </location>
</feature>
<feature type="chain" id="PRO_0000012633" description="Guanine nucleotide-binding protein G(I)/G(S)/G(O) subunit gamma-7">
    <location>
        <begin position="2"/>
        <end position="65"/>
    </location>
</feature>
<feature type="propeptide" id="PRO_0000012634" description="Removed in mature form" evidence="1">
    <location>
        <begin position="66"/>
        <end position="68"/>
    </location>
</feature>
<feature type="modified residue" description="Blocked amino end (Ser); alternate">
    <location>
        <position position="2"/>
    </location>
</feature>
<feature type="modified residue" description="N-acetylserine; alternate" evidence="2">
    <location>
        <position position="2"/>
    </location>
</feature>
<feature type="modified residue" description="Cysteine methyl ester" evidence="1">
    <location>
        <position position="65"/>
    </location>
</feature>
<feature type="lipid moiety-binding region" description="S-geranylgeranyl cysteine" evidence="1">
    <location>
        <position position="65"/>
    </location>
</feature>
<feature type="sequence conflict" description="In Ref. 3; AA sequence." evidence="4" ref="3">
    <location>
        <begin position="27"/>
        <end position="29"/>
    </location>
</feature>
<keyword id="KW-0007">Acetylation</keyword>
<keyword id="KW-1003">Cell membrane</keyword>
<keyword id="KW-0903">Direct protein sequencing</keyword>
<keyword id="KW-0449">Lipoprotein</keyword>
<keyword id="KW-0472">Membrane</keyword>
<keyword id="KW-0488">Methylation</keyword>
<keyword id="KW-0636">Prenylation</keyword>
<keyword id="KW-1185">Reference proteome</keyword>
<keyword id="KW-0807">Transducer</keyword>
<organism>
    <name type="scientific">Bos taurus</name>
    <name type="common">Bovine</name>
    <dbReference type="NCBI Taxonomy" id="9913"/>
    <lineage>
        <taxon>Eukaryota</taxon>
        <taxon>Metazoa</taxon>
        <taxon>Chordata</taxon>
        <taxon>Craniata</taxon>
        <taxon>Vertebrata</taxon>
        <taxon>Euteleostomi</taxon>
        <taxon>Mammalia</taxon>
        <taxon>Eutheria</taxon>
        <taxon>Laurasiatheria</taxon>
        <taxon>Artiodactyla</taxon>
        <taxon>Ruminantia</taxon>
        <taxon>Pecora</taxon>
        <taxon>Bovidae</taxon>
        <taxon>Bovinae</taxon>
        <taxon>Bos</taxon>
    </lineage>
</organism>
<proteinExistence type="evidence at protein level"/>
<evidence type="ECO:0000250" key="1"/>
<evidence type="ECO:0000250" key="2">
    <source>
        <dbReference type="UniProtKB" id="O60262"/>
    </source>
</evidence>
<evidence type="ECO:0000269" key="3">
    <source>
    </source>
</evidence>
<evidence type="ECO:0000305" key="4"/>
<gene>
    <name type="primary">GNG7</name>
    <name type="synonym">GNGT7</name>
</gene>
<name>GBG7_BOVIN</name>
<sequence>MSATNNIAQARKLVEQLRIEAGIERIKVSKASSELMSYCEQHARNDPLLVGVPASENPFKDKKPCIIL</sequence>
<protein>
    <recommendedName>
        <fullName>Guanine nucleotide-binding protein G(I)/G(S)/G(O) subunit gamma-7</fullName>
    </recommendedName>
    <alternativeName>
        <fullName>G gamma-II</fullName>
    </alternativeName>
</protein>
<dbReference type="EMBL" id="M99393">
    <property type="status" value="NOT_ANNOTATED_CDS"/>
    <property type="molecule type" value="mRNA"/>
</dbReference>
<dbReference type="EMBL" id="BC151397">
    <property type="protein sequence ID" value="AAI51398.1"/>
    <property type="molecule type" value="mRNA"/>
</dbReference>
<dbReference type="PIR" id="A45128">
    <property type="entry name" value="A45128"/>
</dbReference>
<dbReference type="RefSeq" id="NP_001106785.1">
    <property type="nucleotide sequence ID" value="NM_001113314.1"/>
</dbReference>
<dbReference type="SMR" id="P30671"/>
<dbReference type="DIP" id="DIP-203N"/>
<dbReference type="FunCoup" id="P30671">
    <property type="interactions" value="1243"/>
</dbReference>
<dbReference type="STRING" id="9913.ENSBTAP00000010058"/>
<dbReference type="PaxDb" id="9913-ENSBTAP00000010058"/>
<dbReference type="Ensembl" id="ENSBTAT00000010058.4">
    <property type="protein sequence ID" value="ENSBTAP00000010058.3"/>
    <property type="gene ID" value="ENSBTAG00000007644.5"/>
</dbReference>
<dbReference type="GeneID" id="618399"/>
<dbReference type="KEGG" id="bta:618399"/>
<dbReference type="CTD" id="2788"/>
<dbReference type="VEuPathDB" id="HostDB:ENSBTAG00000007644"/>
<dbReference type="VGNC" id="VGNC:29468">
    <property type="gene designation" value="GNG7"/>
</dbReference>
<dbReference type="eggNOG" id="KOG4119">
    <property type="taxonomic scope" value="Eukaryota"/>
</dbReference>
<dbReference type="GeneTree" id="ENSGT01100000263497"/>
<dbReference type="HOGENOM" id="CLU_168377_3_1_1"/>
<dbReference type="InParanoid" id="P30671"/>
<dbReference type="OMA" id="CLELMNY"/>
<dbReference type="OrthoDB" id="6264244at2759"/>
<dbReference type="TreeFam" id="TF319909"/>
<dbReference type="Reactome" id="R-BTA-1296041">
    <property type="pathway name" value="Activation of G protein gated Potassium channels"/>
</dbReference>
<dbReference type="Reactome" id="R-BTA-202040">
    <property type="pathway name" value="G-protein activation"/>
</dbReference>
<dbReference type="Reactome" id="R-BTA-381676">
    <property type="pathway name" value="Glucagon-like Peptide-1 (GLP1) regulates insulin secretion"/>
</dbReference>
<dbReference type="Reactome" id="R-BTA-392170">
    <property type="pathway name" value="ADP signalling through P2Y purinoceptor 12"/>
</dbReference>
<dbReference type="Reactome" id="R-BTA-392451">
    <property type="pathway name" value="G beta:gamma signalling through PI3Kgamma"/>
</dbReference>
<dbReference type="Reactome" id="R-BTA-392851">
    <property type="pathway name" value="Prostacyclin signalling through prostacyclin receptor"/>
</dbReference>
<dbReference type="Reactome" id="R-BTA-400042">
    <property type="pathway name" value="Adrenaline,noradrenaline inhibits insulin secretion"/>
</dbReference>
<dbReference type="Reactome" id="R-BTA-4086398">
    <property type="pathway name" value="Ca2+ pathway"/>
</dbReference>
<dbReference type="Reactome" id="R-BTA-416476">
    <property type="pathway name" value="G alpha (q) signalling events"/>
</dbReference>
<dbReference type="Reactome" id="R-BTA-416482">
    <property type="pathway name" value="G alpha (12/13) signalling events"/>
</dbReference>
<dbReference type="Reactome" id="R-BTA-418217">
    <property type="pathway name" value="G beta:gamma signalling through PLC beta"/>
</dbReference>
<dbReference type="Reactome" id="R-BTA-418555">
    <property type="pathway name" value="G alpha (s) signalling events"/>
</dbReference>
<dbReference type="Reactome" id="R-BTA-418592">
    <property type="pathway name" value="ADP signalling through P2Y purinoceptor 1"/>
</dbReference>
<dbReference type="Reactome" id="R-BTA-418594">
    <property type="pathway name" value="G alpha (i) signalling events"/>
</dbReference>
<dbReference type="Reactome" id="R-BTA-418597">
    <property type="pathway name" value="G alpha (z) signalling events"/>
</dbReference>
<dbReference type="Reactome" id="R-BTA-420092">
    <property type="pathway name" value="Glucagon-type ligand receptors"/>
</dbReference>
<dbReference type="Reactome" id="R-BTA-428930">
    <property type="pathway name" value="Thromboxane signalling through TP receptor"/>
</dbReference>
<dbReference type="Reactome" id="R-BTA-432040">
    <property type="pathway name" value="Vasopressin regulates renal water homeostasis via Aquaporins"/>
</dbReference>
<dbReference type="Reactome" id="R-BTA-456926">
    <property type="pathway name" value="Thrombin signalling through proteinase activated receptors (PARs)"/>
</dbReference>
<dbReference type="Reactome" id="R-BTA-500657">
    <property type="pathway name" value="Presynaptic function of Kainate receptors"/>
</dbReference>
<dbReference type="Reactome" id="R-BTA-6814122">
    <property type="pathway name" value="Cooperation of PDCL (PhLP1) and TRiC/CCT in G-protein beta folding"/>
</dbReference>
<dbReference type="Reactome" id="R-BTA-8964315">
    <property type="pathway name" value="G beta:gamma signalling through BTK"/>
</dbReference>
<dbReference type="Reactome" id="R-BTA-8964616">
    <property type="pathway name" value="G beta:gamma signalling through CDC42"/>
</dbReference>
<dbReference type="Reactome" id="R-BTA-9009391">
    <property type="pathway name" value="Extra-nuclear estrogen signaling"/>
</dbReference>
<dbReference type="Reactome" id="R-BTA-9856530">
    <property type="pathway name" value="High laminar flow shear stress activates signaling by PIEZO1 and PECAM1:CDH5:KDR in endothelial cells"/>
</dbReference>
<dbReference type="Reactome" id="R-BTA-997272">
    <property type="pathway name" value="Inhibition of voltage gated Ca2+ channels via Gbeta/gamma subunits"/>
</dbReference>
<dbReference type="Proteomes" id="UP000009136">
    <property type="component" value="Chromosome 7"/>
</dbReference>
<dbReference type="Bgee" id="ENSBTAG00000007644">
    <property type="expression patterns" value="Expressed in floor plate of diencephalon and 102 other cell types or tissues"/>
</dbReference>
<dbReference type="GO" id="GO:0005834">
    <property type="term" value="C:heterotrimeric G-protein complex"/>
    <property type="evidence" value="ECO:0000318"/>
    <property type="project" value="GO_Central"/>
</dbReference>
<dbReference type="GO" id="GO:0045202">
    <property type="term" value="C:synapse"/>
    <property type="evidence" value="ECO:0007669"/>
    <property type="project" value="Ensembl"/>
</dbReference>
<dbReference type="GO" id="GO:0031681">
    <property type="term" value="F:G-protein beta-subunit binding"/>
    <property type="evidence" value="ECO:0000318"/>
    <property type="project" value="GO_Central"/>
</dbReference>
<dbReference type="GO" id="GO:0001662">
    <property type="term" value="P:behavioral fear response"/>
    <property type="evidence" value="ECO:0007669"/>
    <property type="project" value="Ensembl"/>
</dbReference>
<dbReference type="GO" id="GO:0007186">
    <property type="term" value="P:G protein-coupled receptor signaling pathway"/>
    <property type="evidence" value="ECO:0000318"/>
    <property type="project" value="GO_Central"/>
</dbReference>
<dbReference type="GO" id="GO:0007626">
    <property type="term" value="P:locomotory behavior"/>
    <property type="evidence" value="ECO:0007669"/>
    <property type="project" value="Ensembl"/>
</dbReference>
<dbReference type="GO" id="GO:0007168">
    <property type="term" value="P:receptor guanylyl cyclase signaling pathway"/>
    <property type="evidence" value="ECO:0007669"/>
    <property type="project" value="Ensembl"/>
</dbReference>
<dbReference type="CDD" id="cd00068">
    <property type="entry name" value="GGL"/>
    <property type="match status" value="1"/>
</dbReference>
<dbReference type="FunFam" id="4.10.260.10:FF:000001">
    <property type="entry name" value="Guanine nucleotide-binding protein subunit gamma"/>
    <property type="match status" value="1"/>
</dbReference>
<dbReference type="Gene3D" id="4.10.260.10">
    <property type="entry name" value="Transducin (heterotrimeric G protein), gamma chain"/>
    <property type="match status" value="1"/>
</dbReference>
<dbReference type="InterPro" id="IPR015898">
    <property type="entry name" value="G-protein_gamma-like_dom"/>
</dbReference>
<dbReference type="InterPro" id="IPR036284">
    <property type="entry name" value="GGL_sf"/>
</dbReference>
<dbReference type="InterPro" id="IPR001770">
    <property type="entry name" value="Gprotein-gamma"/>
</dbReference>
<dbReference type="PANTHER" id="PTHR13809">
    <property type="entry name" value="GUANINE NUCLEOTIDE-BINDING PROTEIN GAMMA SUBUNIT"/>
    <property type="match status" value="1"/>
</dbReference>
<dbReference type="Pfam" id="PF00631">
    <property type="entry name" value="G-gamma"/>
    <property type="match status" value="1"/>
</dbReference>
<dbReference type="PRINTS" id="PR00321">
    <property type="entry name" value="GPROTEING"/>
</dbReference>
<dbReference type="SMART" id="SM01224">
    <property type="entry name" value="G_gamma"/>
    <property type="match status" value="1"/>
</dbReference>
<dbReference type="SMART" id="SM00224">
    <property type="entry name" value="GGL"/>
    <property type="match status" value="1"/>
</dbReference>
<dbReference type="SUPFAM" id="SSF48670">
    <property type="entry name" value="Transducin (heterotrimeric G protein), gamma chain"/>
    <property type="match status" value="1"/>
</dbReference>
<dbReference type="PROSITE" id="PS50058">
    <property type="entry name" value="G_PROTEIN_GAMMA"/>
    <property type="match status" value="1"/>
</dbReference>
<reference key="1">
    <citation type="journal article" date="1992" name="J. Biol. Chem.">
        <title>Selective tissue distribution of G protein gamma subunits, including a new form of the gamma subunits identified by cDNA cloning.</title>
        <authorList>
            <person name="Cali J.J."/>
            <person name="Balcueva E.A."/>
            <person name="Rybalkin I."/>
            <person name="Robishaw J.D."/>
        </authorList>
    </citation>
    <scope>NUCLEOTIDE SEQUENCE [MRNA]</scope>
    <scope>PROTEIN SEQUENCE OF 19-25; 30-44 AND 46-60</scope>
    <source>
        <tissue>Brain</tissue>
    </source>
</reference>
<reference key="2">
    <citation type="submission" date="2007-07" db="EMBL/GenBank/DDBJ databases">
        <authorList>
            <consortium name="NIH - Mammalian Gene Collection (MGC) project"/>
        </authorList>
    </citation>
    <scope>NUCLEOTIDE SEQUENCE [LARGE SCALE MRNA]</scope>
    <source>
        <strain>Hereford</strain>
        <tissue>Basal ganglia</tissue>
    </source>
</reference>
<reference key="3">
    <citation type="journal article" date="1993" name="Biochem. Biophys. Res. Commun.">
        <title>Identification of a novel gamma-subunit from bovine brain GTP binding regulatory proteins (Gi/o).</title>
        <authorList>
            <person name="Sohma H."/>
            <person name="Hashimoto H."/>
            <person name="Hiraike N."/>
            <person name="Ohguro H."/>
            <person name="Akino T."/>
        </authorList>
    </citation>
    <scope>PROTEIN SEQUENCE OF 2-59</scope>
    <source>
        <tissue>Brain</tissue>
    </source>
</reference>